<name>TRUB_TROWT</name>
<accession>Q820Y5</accession>
<sequence>MLGKVERSEMYILFAMTQVLLVDKISGITSHTAVAKIRHLTGIKKIGHCGTLDPAACGLLIMGCGTATRLIRYMSNLDKRYIATITLGTQTTTDDSEGEIIYSAPKPSLDKITLESIGRAAEKLSGTIKQIPSAYSAIKVSGNRAYNLARQGIIPKLNAREVRVHWKFLGDFENNQVHVQITCSSGTYVRALARDMGKFLGVGGHLSYLKRLSIGPFHLHEIYREINKKEATMSERTPSGNTQGLTDNMAISESDKHDCTEPGINCTELGIKDTCTALREVHYTQGDTLSFTRLTALQALSRIYKPIEVSQKQADDLSCGRYISLGIDSKGPVCAVCKENLIAVIQPVSAGLWRPETVLSDNRKLNSNAAQDASGST</sequence>
<keyword id="KW-0413">Isomerase</keyword>
<keyword id="KW-1185">Reference proteome</keyword>
<keyword id="KW-0819">tRNA processing</keyword>
<dbReference type="EC" id="5.4.99.25" evidence="1"/>
<dbReference type="EMBL" id="AE014184">
    <property type="protein sequence ID" value="AAO44184.1"/>
    <property type="molecule type" value="Genomic_DNA"/>
</dbReference>
<dbReference type="SMR" id="Q820Y5"/>
<dbReference type="STRING" id="203267.TWT_087"/>
<dbReference type="KEGG" id="twh:TWT_087"/>
<dbReference type="eggNOG" id="COG0130">
    <property type="taxonomic scope" value="Bacteria"/>
</dbReference>
<dbReference type="HOGENOM" id="CLU_032087_0_0_11"/>
<dbReference type="OrthoDB" id="9802309at2"/>
<dbReference type="Proteomes" id="UP000002200">
    <property type="component" value="Chromosome"/>
</dbReference>
<dbReference type="GO" id="GO:0003723">
    <property type="term" value="F:RNA binding"/>
    <property type="evidence" value="ECO:0007669"/>
    <property type="project" value="InterPro"/>
</dbReference>
<dbReference type="GO" id="GO:0160148">
    <property type="term" value="F:tRNA pseudouridine(55) synthase activity"/>
    <property type="evidence" value="ECO:0007669"/>
    <property type="project" value="UniProtKB-EC"/>
</dbReference>
<dbReference type="GO" id="GO:1990481">
    <property type="term" value="P:mRNA pseudouridine synthesis"/>
    <property type="evidence" value="ECO:0007669"/>
    <property type="project" value="TreeGrafter"/>
</dbReference>
<dbReference type="GO" id="GO:0031119">
    <property type="term" value="P:tRNA pseudouridine synthesis"/>
    <property type="evidence" value="ECO:0007669"/>
    <property type="project" value="UniProtKB-UniRule"/>
</dbReference>
<dbReference type="CDD" id="cd02573">
    <property type="entry name" value="PseudoU_synth_EcTruB"/>
    <property type="match status" value="1"/>
</dbReference>
<dbReference type="Gene3D" id="3.30.2350.10">
    <property type="entry name" value="Pseudouridine synthase"/>
    <property type="match status" value="1"/>
</dbReference>
<dbReference type="HAMAP" id="MF_01080">
    <property type="entry name" value="TruB_bact"/>
    <property type="match status" value="1"/>
</dbReference>
<dbReference type="InterPro" id="IPR020103">
    <property type="entry name" value="PsdUridine_synth_cat_dom_sf"/>
</dbReference>
<dbReference type="InterPro" id="IPR002501">
    <property type="entry name" value="PsdUridine_synth_N"/>
</dbReference>
<dbReference type="InterPro" id="IPR014780">
    <property type="entry name" value="tRNA_psdUridine_synth_TruB"/>
</dbReference>
<dbReference type="NCBIfam" id="TIGR00431">
    <property type="entry name" value="TruB"/>
    <property type="match status" value="1"/>
</dbReference>
<dbReference type="PANTHER" id="PTHR13767:SF2">
    <property type="entry name" value="PSEUDOURIDYLATE SYNTHASE TRUB1"/>
    <property type="match status" value="1"/>
</dbReference>
<dbReference type="PANTHER" id="PTHR13767">
    <property type="entry name" value="TRNA-PSEUDOURIDINE SYNTHASE"/>
    <property type="match status" value="1"/>
</dbReference>
<dbReference type="Pfam" id="PF01509">
    <property type="entry name" value="TruB_N"/>
    <property type="match status" value="1"/>
</dbReference>
<dbReference type="SUPFAM" id="SSF55120">
    <property type="entry name" value="Pseudouridine synthase"/>
    <property type="match status" value="1"/>
</dbReference>
<evidence type="ECO:0000255" key="1">
    <source>
        <dbReference type="HAMAP-Rule" id="MF_01080"/>
    </source>
</evidence>
<gene>
    <name evidence="1" type="primary">truB</name>
    <name type="ordered locus">TWT_087</name>
</gene>
<organism>
    <name type="scientific">Tropheryma whipplei (strain Twist)</name>
    <name type="common">Whipple's bacillus</name>
    <dbReference type="NCBI Taxonomy" id="203267"/>
    <lineage>
        <taxon>Bacteria</taxon>
        <taxon>Bacillati</taxon>
        <taxon>Actinomycetota</taxon>
        <taxon>Actinomycetes</taxon>
        <taxon>Micrococcales</taxon>
        <taxon>Tropherymataceae</taxon>
        <taxon>Tropheryma</taxon>
    </lineage>
</organism>
<comment type="function">
    <text evidence="1">Responsible for synthesis of pseudouridine from uracil-55 in the psi GC loop of transfer RNAs.</text>
</comment>
<comment type="catalytic activity">
    <reaction evidence="1">
        <text>uridine(55) in tRNA = pseudouridine(55) in tRNA</text>
        <dbReference type="Rhea" id="RHEA:42532"/>
        <dbReference type="Rhea" id="RHEA-COMP:10101"/>
        <dbReference type="Rhea" id="RHEA-COMP:10102"/>
        <dbReference type="ChEBI" id="CHEBI:65314"/>
        <dbReference type="ChEBI" id="CHEBI:65315"/>
        <dbReference type="EC" id="5.4.99.25"/>
    </reaction>
</comment>
<comment type="similarity">
    <text evidence="1">Belongs to the pseudouridine synthase TruB family. Type 1 subfamily.</text>
</comment>
<reference key="1">
    <citation type="journal article" date="2003" name="Genome Res.">
        <title>Tropheryma whipplei twist: a human pathogenic Actinobacteria with a reduced genome.</title>
        <authorList>
            <person name="Raoult D."/>
            <person name="Ogata H."/>
            <person name="Audic S."/>
            <person name="Robert C."/>
            <person name="Suhre K."/>
            <person name="Drancourt M."/>
            <person name="Claverie J.-M."/>
        </authorList>
    </citation>
    <scope>NUCLEOTIDE SEQUENCE [LARGE SCALE GENOMIC DNA]</scope>
    <source>
        <strain>Twist</strain>
    </source>
</reference>
<feature type="chain" id="PRO_0000121936" description="tRNA pseudouridine synthase B">
    <location>
        <begin position="1"/>
        <end position="377"/>
    </location>
</feature>
<feature type="active site" description="Nucleophile" evidence="1">
    <location>
        <position position="53"/>
    </location>
</feature>
<proteinExistence type="inferred from homology"/>
<protein>
    <recommendedName>
        <fullName evidence="1">tRNA pseudouridine synthase B</fullName>
        <ecNumber evidence="1">5.4.99.25</ecNumber>
    </recommendedName>
    <alternativeName>
        <fullName evidence="1">tRNA pseudouridine(55) synthase</fullName>
        <shortName evidence="1">Psi55 synthase</shortName>
    </alternativeName>
    <alternativeName>
        <fullName evidence="1">tRNA pseudouridylate synthase</fullName>
    </alternativeName>
    <alternativeName>
        <fullName evidence="1">tRNA-uridine isomerase</fullName>
    </alternativeName>
</protein>